<gene>
    <name evidence="1" type="primary">rplP</name>
    <name type="ordered locus">Gura_1074</name>
</gene>
<protein>
    <recommendedName>
        <fullName evidence="1">Large ribosomal subunit protein uL16</fullName>
    </recommendedName>
    <alternativeName>
        <fullName evidence="2">50S ribosomal protein L16</fullName>
    </alternativeName>
</protein>
<keyword id="KW-1185">Reference proteome</keyword>
<keyword id="KW-0687">Ribonucleoprotein</keyword>
<keyword id="KW-0689">Ribosomal protein</keyword>
<keyword id="KW-0694">RNA-binding</keyword>
<keyword id="KW-0699">rRNA-binding</keyword>
<keyword id="KW-0820">tRNA-binding</keyword>
<proteinExistence type="inferred from homology"/>
<dbReference type="EMBL" id="CP000698">
    <property type="protein sequence ID" value="ABQ25280.1"/>
    <property type="molecule type" value="Genomic_DNA"/>
</dbReference>
<dbReference type="RefSeq" id="WP_011938003.1">
    <property type="nucleotide sequence ID" value="NC_009483.1"/>
</dbReference>
<dbReference type="SMR" id="A5GAX2"/>
<dbReference type="STRING" id="351605.Gura_1074"/>
<dbReference type="KEGG" id="gur:Gura_1074"/>
<dbReference type="HOGENOM" id="CLU_078858_2_1_7"/>
<dbReference type="OrthoDB" id="9802589at2"/>
<dbReference type="Proteomes" id="UP000006695">
    <property type="component" value="Chromosome"/>
</dbReference>
<dbReference type="GO" id="GO:0022625">
    <property type="term" value="C:cytosolic large ribosomal subunit"/>
    <property type="evidence" value="ECO:0007669"/>
    <property type="project" value="TreeGrafter"/>
</dbReference>
<dbReference type="GO" id="GO:0019843">
    <property type="term" value="F:rRNA binding"/>
    <property type="evidence" value="ECO:0007669"/>
    <property type="project" value="UniProtKB-UniRule"/>
</dbReference>
<dbReference type="GO" id="GO:0003735">
    <property type="term" value="F:structural constituent of ribosome"/>
    <property type="evidence" value="ECO:0007669"/>
    <property type="project" value="InterPro"/>
</dbReference>
<dbReference type="GO" id="GO:0000049">
    <property type="term" value="F:tRNA binding"/>
    <property type="evidence" value="ECO:0007669"/>
    <property type="project" value="UniProtKB-KW"/>
</dbReference>
<dbReference type="GO" id="GO:0006412">
    <property type="term" value="P:translation"/>
    <property type="evidence" value="ECO:0007669"/>
    <property type="project" value="UniProtKB-UniRule"/>
</dbReference>
<dbReference type="CDD" id="cd01433">
    <property type="entry name" value="Ribosomal_L16_L10e"/>
    <property type="match status" value="1"/>
</dbReference>
<dbReference type="FunFam" id="3.90.1170.10:FF:000001">
    <property type="entry name" value="50S ribosomal protein L16"/>
    <property type="match status" value="1"/>
</dbReference>
<dbReference type="Gene3D" id="3.90.1170.10">
    <property type="entry name" value="Ribosomal protein L10e/L16"/>
    <property type="match status" value="1"/>
</dbReference>
<dbReference type="HAMAP" id="MF_01342">
    <property type="entry name" value="Ribosomal_uL16"/>
    <property type="match status" value="1"/>
</dbReference>
<dbReference type="InterPro" id="IPR047873">
    <property type="entry name" value="Ribosomal_uL16"/>
</dbReference>
<dbReference type="InterPro" id="IPR000114">
    <property type="entry name" value="Ribosomal_uL16_bact-type"/>
</dbReference>
<dbReference type="InterPro" id="IPR020798">
    <property type="entry name" value="Ribosomal_uL16_CS"/>
</dbReference>
<dbReference type="InterPro" id="IPR016180">
    <property type="entry name" value="Ribosomal_uL16_dom"/>
</dbReference>
<dbReference type="InterPro" id="IPR036920">
    <property type="entry name" value="Ribosomal_uL16_sf"/>
</dbReference>
<dbReference type="NCBIfam" id="TIGR01164">
    <property type="entry name" value="rplP_bact"/>
    <property type="match status" value="1"/>
</dbReference>
<dbReference type="PANTHER" id="PTHR12220">
    <property type="entry name" value="50S/60S RIBOSOMAL PROTEIN L16"/>
    <property type="match status" value="1"/>
</dbReference>
<dbReference type="PANTHER" id="PTHR12220:SF13">
    <property type="entry name" value="LARGE RIBOSOMAL SUBUNIT PROTEIN UL16M"/>
    <property type="match status" value="1"/>
</dbReference>
<dbReference type="Pfam" id="PF00252">
    <property type="entry name" value="Ribosomal_L16"/>
    <property type="match status" value="1"/>
</dbReference>
<dbReference type="PRINTS" id="PR00060">
    <property type="entry name" value="RIBOSOMALL16"/>
</dbReference>
<dbReference type="SUPFAM" id="SSF54686">
    <property type="entry name" value="Ribosomal protein L16p/L10e"/>
    <property type="match status" value="1"/>
</dbReference>
<dbReference type="PROSITE" id="PS00586">
    <property type="entry name" value="RIBOSOMAL_L16_1"/>
    <property type="match status" value="1"/>
</dbReference>
<dbReference type="PROSITE" id="PS00701">
    <property type="entry name" value="RIBOSOMAL_L16_2"/>
    <property type="match status" value="1"/>
</dbReference>
<organism>
    <name type="scientific">Geotalea uraniireducens (strain Rf4)</name>
    <name type="common">Geobacter uraniireducens</name>
    <dbReference type="NCBI Taxonomy" id="351605"/>
    <lineage>
        <taxon>Bacteria</taxon>
        <taxon>Pseudomonadati</taxon>
        <taxon>Thermodesulfobacteriota</taxon>
        <taxon>Desulfuromonadia</taxon>
        <taxon>Geobacterales</taxon>
        <taxon>Geobacteraceae</taxon>
        <taxon>Geotalea</taxon>
    </lineage>
</organism>
<evidence type="ECO:0000255" key="1">
    <source>
        <dbReference type="HAMAP-Rule" id="MF_01342"/>
    </source>
</evidence>
<evidence type="ECO:0000305" key="2"/>
<comment type="function">
    <text evidence="1">Binds 23S rRNA and is also seen to make contacts with the A and possibly P site tRNAs.</text>
</comment>
<comment type="subunit">
    <text evidence="1">Part of the 50S ribosomal subunit.</text>
</comment>
<comment type="similarity">
    <text evidence="1">Belongs to the universal ribosomal protein uL16 family.</text>
</comment>
<name>RL16_GEOUR</name>
<sequence>MLMPKKVKYRKQMKGRMSGTPQRGVSLAFGEFGLQATECGWLDSRQIEAARIAMNRYIKRGGKIWIRIFPDKPLTAKPAETRMGKGKGSPDSWVCVIKPGRILYEMEGVTEEIAREAFRLAAHKLPIPTKFTSRKDAHEG</sequence>
<accession>A5GAX2</accession>
<reference key="1">
    <citation type="submission" date="2007-05" db="EMBL/GenBank/DDBJ databases">
        <title>Complete sequence of Geobacter uraniireducens Rf4.</title>
        <authorList>
            <consortium name="US DOE Joint Genome Institute"/>
            <person name="Copeland A."/>
            <person name="Lucas S."/>
            <person name="Lapidus A."/>
            <person name="Barry K."/>
            <person name="Detter J.C."/>
            <person name="Glavina del Rio T."/>
            <person name="Hammon N."/>
            <person name="Israni S."/>
            <person name="Dalin E."/>
            <person name="Tice H."/>
            <person name="Pitluck S."/>
            <person name="Chertkov O."/>
            <person name="Brettin T."/>
            <person name="Bruce D."/>
            <person name="Han C."/>
            <person name="Schmutz J."/>
            <person name="Larimer F."/>
            <person name="Land M."/>
            <person name="Hauser L."/>
            <person name="Kyrpides N."/>
            <person name="Mikhailova N."/>
            <person name="Shelobolina E."/>
            <person name="Aklujkar M."/>
            <person name="Lovley D."/>
            <person name="Richardson P."/>
        </authorList>
    </citation>
    <scope>NUCLEOTIDE SEQUENCE [LARGE SCALE GENOMIC DNA]</scope>
    <source>
        <strain>ATCC BAA-1134 / JCM 13001 / Rf4</strain>
    </source>
</reference>
<feature type="chain" id="PRO_1000086758" description="Large ribosomal subunit protein uL16">
    <location>
        <begin position="1"/>
        <end position="140"/>
    </location>
</feature>